<evidence type="ECO:0000250" key="1">
    <source>
        <dbReference type="UniProtKB" id="O60264"/>
    </source>
</evidence>
<evidence type="ECO:0000255" key="2"/>
<evidence type="ECO:0000255" key="3">
    <source>
        <dbReference type="PROSITE-ProRule" id="PRU00541"/>
    </source>
</evidence>
<evidence type="ECO:0000255" key="4">
    <source>
        <dbReference type="PROSITE-ProRule" id="PRU00542"/>
    </source>
</evidence>
<evidence type="ECO:0000255" key="5">
    <source>
        <dbReference type="PROSITE-ProRule" id="PRU00624"/>
    </source>
</evidence>
<evidence type="ECO:0000256" key="6">
    <source>
        <dbReference type="SAM" id="MobiDB-lite"/>
    </source>
</evidence>
<evidence type="ECO:0000269" key="7">
    <source>
    </source>
</evidence>
<evidence type="ECO:0000269" key="8">
    <source>
    </source>
</evidence>
<evidence type="ECO:0000269" key="9">
    <source>
    </source>
</evidence>
<evidence type="ECO:0000269" key="10">
    <source>
    </source>
</evidence>
<evidence type="ECO:0000269" key="11">
    <source>
    </source>
</evidence>
<evidence type="ECO:0000303" key="12">
    <source>
    </source>
</evidence>
<evidence type="ECO:0000305" key="13"/>
<evidence type="ECO:0000312" key="14">
    <source>
        <dbReference type="Araport" id="AT3G06400"/>
    </source>
</evidence>
<evidence type="ECO:0000312" key="15">
    <source>
        <dbReference type="EMBL" id="AAF08585.1"/>
    </source>
</evidence>
<accession>Q8RWY3</accession>
<accession>F4JAW0</accession>
<accession>F4JAW1</accession>
<accession>Q9SQU3</accession>
<organism>
    <name type="scientific">Arabidopsis thaliana</name>
    <name type="common">Mouse-ear cress</name>
    <dbReference type="NCBI Taxonomy" id="3702"/>
    <lineage>
        <taxon>Eukaryota</taxon>
        <taxon>Viridiplantae</taxon>
        <taxon>Streptophyta</taxon>
        <taxon>Embryophyta</taxon>
        <taxon>Tracheophyta</taxon>
        <taxon>Spermatophyta</taxon>
        <taxon>Magnoliopsida</taxon>
        <taxon>eudicotyledons</taxon>
        <taxon>Gunneridae</taxon>
        <taxon>Pentapetalae</taxon>
        <taxon>rosids</taxon>
        <taxon>malvids</taxon>
        <taxon>Brassicales</taxon>
        <taxon>Brassicaceae</taxon>
        <taxon>Camelineae</taxon>
        <taxon>Arabidopsis</taxon>
    </lineage>
</organism>
<protein>
    <recommendedName>
        <fullName evidence="13">ISWI chromatin-remodeling complex ATPase CHR11</fullName>
        <ecNumber evidence="13">3.6.4.-</ecNumber>
    </recommendedName>
    <alternativeName>
        <fullName evidence="13">ISW2-like</fullName>
    </alternativeName>
    <alternativeName>
        <fullName evidence="12">Protein CHROMATIN REMODELING 11</fullName>
    </alternativeName>
    <alternativeName>
        <fullName evidence="13">Sucrose nonfermenting protein 2 homolog</fullName>
    </alternativeName>
</protein>
<sequence>MARNSNSDEAFSSEEEEERVKDNEEEDEEELEAVARSSGSDDDEVAAADESPVSDGEAAPVEDDYEDEEDEEKAEISKREKARLKEMQKLKKQKIQEMLESQNASIDADMNNKGKGRLKYLLQQTELFAHFAKSDGSSSQKKAKGRGRHASKITEEEEDEEYLKEEEDGLTGSGNTRLLTQPSCIQGKMRDYQLAGLNWLIRLYENGINGILADEMGLGKTLQTISLLAYLHEYRGINGPHMVVAPKSTLGNWMNEIRRFCPVLRAVKFLGNPEERRHIREDLLVAGKFDICVTSFEMAIKEKTALRRFSWRYIIIDEAHRIKNENSLLSKTMRLFSTNYRLLITGTPLQNNLHELWALLNFLLPEIFSSAETFDEWFQISGENDQQEVVQQLHKVLRPFLLRRLKSDVEKGLPPKKETILKVGMSQMQKQYYKALLQKDLEAVNAGGERKRLLNIAMQLRKCCNHPYLFQGAEPGPPYTTGDHLITNAGKMVLLDKLLPKLKERDSRVLIFSQMTRLLDILEDYLMYRGYLYCRIDGNTGGDERDASIEAYNKPGSEKFVFLLSTRAGGLGINLATADVVILYDSDWNPQVDLQAQDRAHRIGQKKEVQVFRFCTESAIEEKVIERAYKKLALDALVIQQGRLAEQKTVNKDELLQMVRYGAEMVFSSKDSTITDEDIDRIIAKGEEATAELDAKMKKFTEDAIQFKMDDSADFYDFDDDNKDENKLDFKKIVSDNWNDPPKRERKRNYSESEYFKQTLRQGAPAKPKEPRIPRMPQLHDFQFFNIQRLTELYEKEVRYLMQTHQKNQLKDTIDVEEPEEGGDPLTTEEVEEKEGLLEEGFSTWSRRDFNTFLRACEKYGRNDIKSIASEMEGKTEEEVERYAKVFKERYKELNDYDRIIKNIERGEARISRKDEIMKAIGKKLDRYRNPWLELKIQYGQNKGKLYNEECDRFMICMIHKLGYGNWDELKAAFRTSSVFRFDWFVKSRTSQELARRCDTLIRLIEKENQEFDERERQARKEKKLAKSATPSKRPLGRQASESPSSTKKRKHLSMR</sequence>
<name>ISW2_ARATH</name>
<proteinExistence type="evidence at protein level"/>
<reference key="1">
    <citation type="journal article" date="2000" name="Nature">
        <title>Sequence and analysis of chromosome 3 of the plant Arabidopsis thaliana.</title>
        <authorList>
            <person name="Salanoubat M."/>
            <person name="Lemcke K."/>
            <person name="Rieger M."/>
            <person name="Ansorge W."/>
            <person name="Unseld M."/>
            <person name="Fartmann B."/>
            <person name="Valle G."/>
            <person name="Bloecker H."/>
            <person name="Perez-Alonso M."/>
            <person name="Obermaier B."/>
            <person name="Delseny M."/>
            <person name="Boutry M."/>
            <person name="Grivell L.A."/>
            <person name="Mache R."/>
            <person name="Puigdomenech P."/>
            <person name="De Simone V."/>
            <person name="Choisne N."/>
            <person name="Artiguenave F."/>
            <person name="Robert C."/>
            <person name="Brottier P."/>
            <person name="Wincker P."/>
            <person name="Cattolico L."/>
            <person name="Weissenbach J."/>
            <person name="Saurin W."/>
            <person name="Quetier F."/>
            <person name="Schaefer M."/>
            <person name="Mueller-Auer S."/>
            <person name="Gabel C."/>
            <person name="Fuchs M."/>
            <person name="Benes V."/>
            <person name="Wurmbach E."/>
            <person name="Drzonek H."/>
            <person name="Erfle H."/>
            <person name="Jordan N."/>
            <person name="Bangert S."/>
            <person name="Wiedelmann R."/>
            <person name="Kranz H."/>
            <person name="Voss H."/>
            <person name="Holland R."/>
            <person name="Brandt P."/>
            <person name="Nyakatura G."/>
            <person name="Vezzi A."/>
            <person name="D'Angelo M."/>
            <person name="Pallavicini A."/>
            <person name="Toppo S."/>
            <person name="Simionati B."/>
            <person name="Conrad A."/>
            <person name="Hornischer K."/>
            <person name="Kauer G."/>
            <person name="Loehnert T.-H."/>
            <person name="Nordsiek G."/>
            <person name="Reichelt J."/>
            <person name="Scharfe M."/>
            <person name="Schoen O."/>
            <person name="Bargues M."/>
            <person name="Terol J."/>
            <person name="Climent J."/>
            <person name="Navarro P."/>
            <person name="Collado C."/>
            <person name="Perez-Perez A."/>
            <person name="Ottenwaelder B."/>
            <person name="Duchemin D."/>
            <person name="Cooke R."/>
            <person name="Laudie M."/>
            <person name="Berger-Llauro C."/>
            <person name="Purnelle B."/>
            <person name="Masuy D."/>
            <person name="de Haan M."/>
            <person name="Maarse A.C."/>
            <person name="Alcaraz J.-P."/>
            <person name="Cottet A."/>
            <person name="Casacuberta E."/>
            <person name="Monfort A."/>
            <person name="Argiriou A."/>
            <person name="Flores M."/>
            <person name="Liguori R."/>
            <person name="Vitale D."/>
            <person name="Mannhaupt G."/>
            <person name="Haase D."/>
            <person name="Schoof H."/>
            <person name="Rudd S."/>
            <person name="Zaccaria P."/>
            <person name="Mewes H.-W."/>
            <person name="Mayer K.F.X."/>
            <person name="Kaul S."/>
            <person name="Town C.D."/>
            <person name="Koo H.L."/>
            <person name="Tallon L.J."/>
            <person name="Jenkins J."/>
            <person name="Rooney T."/>
            <person name="Rizzo M."/>
            <person name="Walts A."/>
            <person name="Utterback T."/>
            <person name="Fujii C.Y."/>
            <person name="Shea T.P."/>
            <person name="Creasy T.H."/>
            <person name="Haas B."/>
            <person name="Maiti R."/>
            <person name="Wu D."/>
            <person name="Peterson J."/>
            <person name="Van Aken S."/>
            <person name="Pai G."/>
            <person name="Militscher J."/>
            <person name="Sellers P."/>
            <person name="Gill J.E."/>
            <person name="Feldblyum T.V."/>
            <person name="Preuss D."/>
            <person name="Lin X."/>
            <person name="Nierman W.C."/>
            <person name="Salzberg S.L."/>
            <person name="White O."/>
            <person name="Venter J.C."/>
            <person name="Fraser C.M."/>
            <person name="Kaneko T."/>
            <person name="Nakamura Y."/>
            <person name="Sato S."/>
            <person name="Kato T."/>
            <person name="Asamizu E."/>
            <person name="Sasamoto S."/>
            <person name="Kimura T."/>
            <person name="Idesawa K."/>
            <person name="Kawashima K."/>
            <person name="Kishida Y."/>
            <person name="Kiyokawa C."/>
            <person name="Kohara M."/>
            <person name="Matsumoto M."/>
            <person name="Matsuno A."/>
            <person name="Muraki A."/>
            <person name="Nakayama S."/>
            <person name="Nakazaki N."/>
            <person name="Shinpo S."/>
            <person name="Takeuchi C."/>
            <person name="Wada T."/>
            <person name="Watanabe A."/>
            <person name="Yamada M."/>
            <person name="Yasuda M."/>
            <person name="Tabata S."/>
        </authorList>
    </citation>
    <scope>NUCLEOTIDE SEQUENCE [LARGE SCALE GENOMIC DNA]</scope>
    <source>
        <strain>cv. Columbia</strain>
    </source>
</reference>
<reference key="2">
    <citation type="journal article" date="2017" name="Plant J.">
        <title>Araport11: a complete reannotation of the Arabidopsis thaliana reference genome.</title>
        <authorList>
            <person name="Cheng C.Y."/>
            <person name="Krishnakumar V."/>
            <person name="Chan A.P."/>
            <person name="Thibaud-Nissen F."/>
            <person name="Schobel S."/>
            <person name="Town C.D."/>
        </authorList>
    </citation>
    <scope>GENOME REANNOTATION</scope>
    <source>
        <strain>cv. Columbia</strain>
    </source>
</reference>
<reference key="3">
    <citation type="journal article" date="2003" name="Science">
        <title>Empirical analysis of transcriptional activity in the Arabidopsis genome.</title>
        <authorList>
            <person name="Yamada K."/>
            <person name="Lim J."/>
            <person name="Dale J.M."/>
            <person name="Chen H."/>
            <person name="Shinn P."/>
            <person name="Palm C.J."/>
            <person name="Southwick A.M."/>
            <person name="Wu H.C."/>
            <person name="Kim C.J."/>
            <person name="Nguyen M."/>
            <person name="Pham P.K."/>
            <person name="Cheuk R.F."/>
            <person name="Karlin-Newmann G."/>
            <person name="Liu S.X."/>
            <person name="Lam B."/>
            <person name="Sakano H."/>
            <person name="Wu T."/>
            <person name="Yu G."/>
            <person name="Miranda M."/>
            <person name="Quach H.L."/>
            <person name="Tripp M."/>
            <person name="Chang C.H."/>
            <person name="Lee J.M."/>
            <person name="Toriumi M.J."/>
            <person name="Chan M.M."/>
            <person name="Tang C.C."/>
            <person name="Onodera C.S."/>
            <person name="Deng J.M."/>
            <person name="Akiyama K."/>
            <person name="Ansari Y."/>
            <person name="Arakawa T."/>
            <person name="Banh J."/>
            <person name="Banno F."/>
            <person name="Bowser L."/>
            <person name="Brooks S.Y."/>
            <person name="Carninci P."/>
            <person name="Chao Q."/>
            <person name="Choy N."/>
            <person name="Enju A."/>
            <person name="Goldsmith A.D."/>
            <person name="Gurjal M."/>
            <person name="Hansen N.F."/>
            <person name="Hayashizaki Y."/>
            <person name="Johnson-Hopson C."/>
            <person name="Hsuan V.W."/>
            <person name="Iida K."/>
            <person name="Karnes M."/>
            <person name="Khan S."/>
            <person name="Koesema E."/>
            <person name="Ishida J."/>
            <person name="Jiang P.X."/>
            <person name="Jones T."/>
            <person name="Kawai J."/>
            <person name="Kamiya A."/>
            <person name="Meyers C."/>
            <person name="Nakajima M."/>
            <person name="Narusaka M."/>
            <person name="Seki M."/>
            <person name="Sakurai T."/>
            <person name="Satou M."/>
            <person name="Tamse R."/>
            <person name="Vaysberg M."/>
            <person name="Wallender E.K."/>
            <person name="Wong C."/>
            <person name="Yamamura Y."/>
            <person name="Yuan S."/>
            <person name="Shinozaki K."/>
            <person name="Davis R.W."/>
            <person name="Theologis A."/>
            <person name="Ecker J.R."/>
        </authorList>
    </citation>
    <scope>NUCLEOTIDE SEQUENCE [LARGE SCALE MRNA] (ISOFORM 2)</scope>
    <source>
        <strain>cv. Columbia</strain>
    </source>
</reference>
<reference key="4">
    <citation type="journal article" date="2005" name="Proc. Natl. Acad. Sci. U.S.A.">
        <title>CHR11, a chromatin-remodeling factor essential for nuclear proliferation during female gametogenesis in Arabidopsis thaliana.</title>
        <authorList>
            <person name="Huanca-Mamani W."/>
            <person name="Garcia-Aguilar M."/>
            <person name="Leon-Martinez G."/>
            <person name="Grossniklaus U."/>
            <person name="Vielle-Calzada J.P."/>
        </authorList>
    </citation>
    <scope>FUNCTION</scope>
    <scope>DEVELOPMENTAL STAGE</scope>
</reference>
<reference key="5">
    <citation type="journal article" date="2012" name="Plant J.">
        <title>Imitation Switch chromatin remodeling factors and their interacting RINGLET proteins act together in controlling the plant vegetative phase in Arabidopsis.</title>
        <authorList>
            <person name="Li G."/>
            <person name="Zhang J."/>
            <person name="Li J."/>
            <person name="Yang Z."/>
            <person name="Huang H."/>
            <person name="Xu L."/>
        </authorList>
    </citation>
    <scope>FUNCTION</scope>
    <scope>INTERACTION WITH RLT1 AND RLT2</scope>
    <scope>SUBCELLULAR LOCATION</scope>
    <scope>TISSUE SPECIFICITY</scope>
    <scope>DISRUPTION PHENOTYPE</scope>
</reference>
<reference key="6">
    <citation type="journal article" date="2013" name="J. Integr. Plant Biol.">
        <title>SLIDE, the protein interacting domain of Imitation Switch remodelers, binds DDT-domain proteins of different subfamilies in chromatin remodeling complexes.</title>
        <authorList>
            <person name="Dong J."/>
            <person name="Gao Z."/>
            <person name="Liu S."/>
            <person name="Li G."/>
            <person name="Yang Z."/>
            <person name="Huang H."/>
            <person name="Xu L."/>
        </authorList>
    </citation>
    <scope>INTERACTION WITH RLT1; RLT2; PTM AND DDR4</scope>
</reference>
<reference key="7">
    <citation type="journal article" date="2013" name="PLoS ONE">
        <title>Genome-wide comparative in silico analysis of the RNA helicase gene family in Zea mays and Glycine max: a comparison with Arabidopsis and Oryza sativa.</title>
        <authorList>
            <person name="Xu R."/>
            <person name="Zhang S."/>
            <person name="Huang J."/>
            <person name="Zheng C."/>
        </authorList>
    </citation>
    <scope>GENE FAMILY</scope>
</reference>
<reference key="8">
    <citation type="journal article" date="2014" name="Plant J.">
        <title>ISWI proteins participate in the genome-wide nucleosome distribution in Arabidopsis.</title>
        <authorList>
            <person name="Li G."/>
            <person name="Liu S."/>
            <person name="Wang J."/>
            <person name="He J."/>
            <person name="Huang H."/>
            <person name="Zhang Y."/>
            <person name="Xu L."/>
        </authorList>
    </citation>
    <scope>FUNCTION</scope>
</reference>
<reference key="9">
    <citation type="journal article" date="2016" name="Elife">
        <title>Arabidopsis FORGETTER1 mediates stress-induced chromatin memory through nucleosome remodeling.</title>
        <authorList>
            <person name="Brzezinka K."/>
            <person name="Altmann S."/>
            <person name="Czesnick H."/>
            <person name="Nicolas P."/>
            <person name="Gorka M."/>
            <person name="Benke E."/>
            <person name="Kabelitz T."/>
            <person name="Jaehne F."/>
            <person name="Graf A."/>
            <person name="Kappel C."/>
            <person name="Baeurle I."/>
        </authorList>
    </citation>
    <scope>FUNCTION</scope>
    <scope>DISRUPTION PHENOTYPE</scope>
    <scope>INTERACTION WITH FGT1</scope>
    <source>
        <strain>cv. Columbia</strain>
    </source>
</reference>
<feature type="chain" id="PRO_0000074331" description="ISWI chromatin-remodeling complex ATPase CHR11">
    <location>
        <begin position="1"/>
        <end position="1056"/>
    </location>
</feature>
<feature type="domain" description="Helicase ATP-binding" evidence="3">
    <location>
        <begin position="201"/>
        <end position="366"/>
    </location>
</feature>
<feature type="domain" description="Helicase C-terminal" evidence="4">
    <location>
        <begin position="494"/>
        <end position="645"/>
    </location>
</feature>
<feature type="domain" description="SANT 1" evidence="5">
    <location>
        <begin position="840"/>
        <end position="892"/>
    </location>
</feature>
<feature type="domain" description="SANT 2" evidence="5">
    <location>
        <begin position="941"/>
        <end position="1002"/>
    </location>
</feature>
<feature type="region of interest" description="Disordered" evidence="6">
    <location>
        <begin position="1"/>
        <end position="80"/>
    </location>
</feature>
<feature type="region of interest" description="Disordered" evidence="6">
    <location>
        <begin position="133"/>
        <end position="175"/>
    </location>
</feature>
<feature type="region of interest" description="Disordered" evidence="6">
    <location>
        <begin position="738"/>
        <end position="774"/>
    </location>
</feature>
<feature type="region of interest" description="Disordered" evidence="6">
    <location>
        <begin position="814"/>
        <end position="833"/>
    </location>
</feature>
<feature type="region of interest" description="Disordered" evidence="6">
    <location>
        <begin position="1011"/>
        <end position="1056"/>
    </location>
</feature>
<feature type="coiled-coil region" evidence="2">
    <location>
        <begin position="12"/>
        <end position="105"/>
    </location>
</feature>
<feature type="short sequence motif" description="DEAH box" evidence="3">
    <location>
        <begin position="317"/>
        <end position="320"/>
    </location>
</feature>
<feature type="compositionally biased region" description="Low complexity" evidence="6">
    <location>
        <begin position="1"/>
        <end position="10"/>
    </location>
</feature>
<feature type="compositionally biased region" description="Acidic residues" evidence="6">
    <location>
        <begin position="11"/>
        <end position="32"/>
    </location>
</feature>
<feature type="compositionally biased region" description="Acidic residues" evidence="6">
    <location>
        <begin position="60"/>
        <end position="73"/>
    </location>
</feature>
<feature type="compositionally biased region" description="Basic residues" evidence="6">
    <location>
        <begin position="141"/>
        <end position="151"/>
    </location>
</feature>
<feature type="compositionally biased region" description="Acidic residues" evidence="6">
    <location>
        <begin position="155"/>
        <end position="169"/>
    </location>
</feature>
<feature type="compositionally biased region" description="Acidic residues" evidence="6">
    <location>
        <begin position="815"/>
        <end position="833"/>
    </location>
</feature>
<feature type="compositionally biased region" description="Basic residues" evidence="6">
    <location>
        <begin position="1047"/>
        <end position="1056"/>
    </location>
</feature>
<feature type="binding site" evidence="3">
    <location>
        <begin position="214"/>
        <end position="221"/>
    </location>
    <ligand>
        <name>ATP</name>
        <dbReference type="ChEBI" id="CHEBI:30616"/>
    </ligand>
</feature>
<feature type="splice variant" id="VSP_058012" description="In isoform 2." evidence="13">
    <location>
        <position position="820"/>
    </location>
</feature>
<feature type="sequence conflict" description="In Ref. 3; AAM13851." evidence="13" ref="3">
    <original>D</original>
    <variation>E</variation>
    <location>
        <position position="168"/>
    </location>
</feature>
<dbReference type="EC" id="3.6.4.-" evidence="13"/>
<dbReference type="EMBL" id="AC011623">
    <property type="protein sequence ID" value="AAF08585.1"/>
    <property type="status" value="ALT_SEQ"/>
    <property type="molecule type" value="Genomic_DNA"/>
</dbReference>
<dbReference type="EMBL" id="CP002686">
    <property type="protein sequence ID" value="AEE74386.1"/>
    <property type="molecule type" value="Genomic_DNA"/>
</dbReference>
<dbReference type="EMBL" id="CP002686">
    <property type="protein sequence ID" value="AEE74388.1"/>
    <property type="molecule type" value="Genomic_DNA"/>
</dbReference>
<dbReference type="EMBL" id="AY091030">
    <property type="protein sequence ID" value="AAM13851.1"/>
    <property type="molecule type" value="mRNA"/>
</dbReference>
<dbReference type="RefSeq" id="NP_001189827.1">
    <molecule id="Q8RWY3-1"/>
    <property type="nucleotide sequence ID" value="NM_001202898.2"/>
</dbReference>
<dbReference type="RefSeq" id="NP_187291.2">
    <molecule id="Q8RWY3-2"/>
    <property type="nucleotide sequence ID" value="NM_111515.5"/>
</dbReference>
<dbReference type="SMR" id="Q8RWY3"/>
<dbReference type="BioGRID" id="5149">
    <property type="interactions" value="34"/>
</dbReference>
<dbReference type="FunCoup" id="Q8RWY3">
    <property type="interactions" value="4306"/>
</dbReference>
<dbReference type="STRING" id="3702.Q8RWY3"/>
<dbReference type="GlyGen" id="Q8RWY3">
    <property type="glycosylation" value="1 site"/>
</dbReference>
<dbReference type="iPTMnet" id="Q8RWY3"/>
<dbReference type="PaxDb" id="3702-AT3G06400.3"/>
<dbReference type="ProteomicsDB" id="238955">
    <molecule id="Q8RWY3-1"/>
</dbReference>
<dbReference type="EnsemblPlants" id="AT3G06400.1">
    <molecule id="Q8RWY3-2"/>
    <property type="protein sequence ID" value="AT3G06400.1"/>
    <property type="gene ID" value="AT3G06400"/>
</dbReference>
<dbReference type="EnsemblPlants" id="AT3G06400.2">
    <molecule id="Q8RWY3-1"/>
    <property type="protein sequence ID" value="AT3G06400.2"/>
    <property type="gene ID" value="AT3G06400"/>
</dbReference>
<dbReference type="GeneID" id="819814"/>
<dbReference type="Gramene" id="AT3G06400.1">
    <molecule id="Q8RWY3-2"/>
    <property type="protein sequence ID" value="AT3G06400.1"/>
    <property type="gene ID" value="AT3G06400"/>
</dbReference>
<dbReference type="Gramene" id="AT3G06400.2">
    <molecule id="Q8RWY3-1"/>
    <property type="protein sequence ID" value="AT3G06400.2"/>
    <property type="gene ID" value="AT3G06400"/>
</dbReference>
<dbReference type="KEGG" id="ath:AT3G06400"/>
<dbReference type="Araport" id="AT3G06400"/>
<dbReference type="TAIR" id="AT3G06400">
    <property type="gene designation" value="CHR11"/>
</dbReference>
<dbReference type="eggNOG" id="KOG0385">
    <property type="taxonomic scope" value="Eukaryota"/>
</dbReference>
<dbReference type="HOGENOM" id="CLU_000315_0_0_1"/>
<dbReference type="InParanoid" id="Q8RWY3"/>
<dbReference type="OrthoDB" id="5857104at2759"/>
<dbReference type="CD-CODE" id="4299E36E">
    <property type="entry name" value="Nucleolus"/>
</dbReference>
<dbReference type="PRO" id="PR:Q8RWY3"/>
<dbReference type="Proteomes" id="UP000006548">
    <property type="component" value="Chromosome 3"/>
</dbReference>
<dbReference type="ExpressionAtlas" id="Q8RWY3">
    <property type="expression patterns" value="baseline and differential"/>
</dbReference>
<dbReference type="GO" id="GO:0005634">
    <property type="term" value="C:nucleus"/>
    <property type="evidence" value="ECO:0000315"/>
    <property type="project" value="UniProtKB"/>
</dbReference>
<dbReference type="GO" id="GO:0005524">
    <property type="term" value="F:ATP binding"/>
    <property type="evidence" value="ECO:0007669"/>
    <property type="project" value="UniProtKB-KW"/>
</dbReference>
<dbReference type="GO" id="GO:0003677">
    <property type="term" value="F:DNA binding"/>
    <property type="evidence" value="ECO:0007669"/>
    <property type="project" value="InterPro"/>
</dbReference>
<dbReference type="GO" id="GO:0004386">
    <property type="term" value="F:helicase activity"/>
    <property type="evidence" value="ECO:0007669"/>
    <property type="project" value="UniProtKB-KW"/>
</dbReference>
<dbReference type="GO" id="GO:0016787">
    <property type="term" value="F:hydrolase activity"/>
    <property type="evidence" value="ECO:0007669"/>
    <property type="project" value="UniProtKB-KW"/>
</dbReference>
<dbReference type="GO" id="GO:0140750">
    <property type="term" value="F:nucleosome array spacer activity"/>
    <property type="evidence" value="ECO:0000315"/>
    <property type="project" value="GO_Central"/>
</dbReference>
<dbReference type="GO" id="GO:0031491">
    <property type="term" value="F:nucleosome binding"/>
    <property type="evidence" value="ECO:0007669"/>
    <property type="project" value="InterPro"/>
</dbReference>
<dbReference type="GO" id="GO:0009908">
    <property type="term" value="P:flower development"/>
    <property type="evidence" value="ECO:0007669"/>
    <property type="project" value="UniProtKB-KW"/>
</dbReference>
<dbReference type="GO" id="GO:0009561">
    <property type="term" value="P:megagametogenesis"/>
    <property type="evidence" value="ECO:0000315"/>
    <property type="project" value="UniProtKB"/>
</dbReference>
<dbReference type="GO" id="GO:1900036">
    <property type="term" value="P:positive regulation of cellular response to heat"/>
    <property type="evidence" value="ECO:0000315"/>
    <property type="project" value="UniProtKB"/>
</dbReference>
<dbReference type="GO" id="GO:0048510">
    <property type="term" value="P:regulation of timing of transition from vegetative to reproductive phase"/>
    <property type="evidence" value="ECO:0000315"/>
    <property type="project" value="UniProtKB"/>
</dbReference>
<dbReference type="CDD" id="cd17997">
    <property type="entry name" value="DEXHc_SMARCA1_SMARCA5"/>
    <property type="match status" value="1"/>
</dbReference>
<dbReference type="CDD" id="cd00167">
    <property type="entry name" value="SANT"/>
    <property type="match status" value="1"/>
</dbReference>
<dbReference type="CDD" id="cd18793">
    <property type="entry name" value="SF2_C_SNF"/>
    <property type="match status" value="1"/>
</dbReference>
<dbReference type="FunFam" id="3.40.50.10810:FF:000028">
    <property type="entry name" value="Chromatin-remodeling complex ATPase"/>
    <property type="match status" value="1"/>
</dbReference>
<dbReference type="FunFam" id="1.10.10.60:FF:000155">
    <property type="entry name" value="ISWI chromatin-remodeling complex ATPase CHR11"/>
    <property type="match status" value="1"/>
</dbReference>
<dbReference type="FunFam" id="1.10.1040.30:FF:000002">
    <property type="entry name" value="ISWI chromatin-remodeling complex ATPase CHR11"/>
    <property type="match status" value="1"/>
</dbReference>
<dbReference type="FunFam" id="3.40.50.300:FF:000519">
    <property type="entry name" value="ISWI chromatin-remodeling complex ATPase CHR11"/>
    <property type="match status" value="1"/>
</dbReference>
<dbReference type="FunFam" id="1.10.10.60:FF:000022">
    <property type="entry name" value="ISWI chromatin-remodeling complex ATPase CHR11 isoform A"/>
    <property type="match status" value="1"/>
</dbReference>
<dbReference type="Gene3D" id="1.10.10.60">
    <property type="entry name" value="Homeodomain-like"/>
    <property type="match status" value="2"/>
</dbReference>
<dbReference type="Gene3D" id="1.20.5.1190">
    <property type="entry name" value="iswi atpase"/>
    <property type="match status" value="1"/>
</dbReference>
<dbReference type="Gene3D" id="1.10.1040.30">
    <property type="entry name" value="ISWI, HAND domain"/>
    <property type="match status" value="1"/>
</dbReference>
<dbReference type="Gene3D" id="3.40.50.300">
    <property type="entry name" value="P-loop containing nucleotide triphosphate hydrolases"/>
    <property type="match status" value="1"/>
</dbReference>
<dbReference type="Gene3D" id="3.40.50.10810">
    <property type="entry name" value="Tandem AAA-ATPase domain"/>
    <property type="match status" value="1"/>
</dbReference>
<dbReference type="InterPro" id="IPR014001">
    <property type="entry name" value="Helicase_ATP-bd"/>
</dbReference>
<dbReference type="InterPro" id="IPR001650">
    <property type="entry name" value="Helicase_C-like"/>
</dbReference>
<dbReference type="InterPro" id="IPR009057">
    <property type="entry name" value="Homeodomain-like_sf"/>
</dbReference>
<dbReference type="InterPro" id="IPR044754">
    <property type="entry name" value="Isw1/2_DEXHc"/>
</dbReference>
<dbReference type="InterPro" id="IPR015194">
    <property type="entry name" value="ISWI_HAND-dom"/>
</dbReference>
<dbReference type="InterPro" id="IPR036306">
    <property type="entry name" value="ISWI_HAND-dom_sf"/>
</dbReference>
<dbReference type="InterPro" id="IPR027417">
    <property type="entry name" value="P-loop_NTPase"/>
</dbReference>
<dbReference type="InterPro" id="IPR001005">
    <property type="entry name" value="SANT/Myb"/>
</dbReference>
<dbReference type="InterPro" id="IPR017884">
    <property type="entry name" value="SANT_dom"/>
</dbReference>
<dbReference type="InterPro" id="IPR015195">
    <property type="entry name" value="SLIDE"/>
</dbReference>
<dbReference type="InterPro" id="IPR038718">
    <property type="entry name" value="SNF2-like_sf"/>
</dbReference>
<dbReference type="InterPro" id="IPR049730">
    <property type="entry name" value="SNF2/RAD54-like_C"/>
</dbReference>
<dbReference type="InterPro" id="IPR000330">
    <property type="entry name" value="SNF2_N"/>
</dbReference>
<dbReference type="PANTHER" id="PTHR45623">
    <property type="entry name" value="CHROMODOMAIN-HELICASE-DNA-BINDING PROTEIN 3-RELATED-RELATED"/>
    <property type="match status" value="1"/>
</dbReference>
<dbReference type="PANTHER" id="PTHR45623:SF49">
    <property type="entry name" value="SWI_SNF-RELATED MATRIX-ASSOCIATED ACTIN-DEPENDENT REGULATOR OF CHROMATIN SUBFAMILY A MEMBER 5"/>
    <property type="match status" value="1"/>
</dbReference>
<dbReference type="Pfam" id="PF09110">
    <property type="entry name" value="HAND"/>
    <property type="match status" value="1"/>
</dbReference>
<dbReference type="Pfam" id="PF00271">
    <property type="entry name" value="Helicase_C"/>
    <property type="match status" value="1"/>
</dbReference>
<dbReference type="Pfam" id="PF09111">
    <property type="entry name" value="SLIDE"/>
    <property type="match status" value="1"/>
</dbReference>
<dbReference type="Pfam" id="PF00176">
    <property type="entry name" value="SNF2-rel_dom"/>
    <property type="match status" value="1"/>
</dbReference>
<dbReference type="SMART" id="SM00487">
    <property type="entry name" value="DEXDc"/>
    <property type="match status" value="1"/>
</dbReference>
<dbReference type="SMART" id="SM00490">
    <property type="entry name" value="HELICc"/>
    <property type="match status" value="1"/>
</dbReference>
<dbReference type="SMART" id="SM00717">
    <property type="entry name" value="SANT"/>
    <property type="match status" value="2"/>
</dbReference>
<dbReference type="SUPFAM" id="SSF101224">
    <property type="entry name" value="HAND domain of the nucleosome remodeling ATPase ISWI"/>
    <property type="match status" value="1"/>
</dbReference>
<dbReference type="SUPFAM" id="SSF46689">
    <property type="entry name" value="Homeodomain-like"/>
    <property type="match status" value="2"/>
</dbReference>
<dbReference type="SUPFAM" id="SSF52540">
    <property type="entry name" value="P-loop containing nucleoside triphosphate hydrolases"/>
    <property type="match status" value="2"/>
</dbReference>
<dbReference type="PROSITE" id="PS51192">
    <property type="entry name" value="HELICASE_ATP_BIND_1"/>
    <property type="match status" value="1"/>
</dbReference>
<dbReference type="PROSITE" id="PS51194">
    <property type="entry name" value="HELICASE_CTER"/>
    <property type="match status" value="1"/>
</dbReference>
<dbReference type="PROSITE" id="PS51293">
    <property type="entry name" value="SANT"/>
    <property type="match status" value="1"/>
</dbReference>
<gene>
    <name evidence="12" type="primary">CHR11</name>
    <name evidence="14" type="ordered locus">At3g06400</name>
    <name evidence="15" type="ORF">F24P17.13</name>
</gene>
<keyword id="KW-0025">Alternative splicing</keyword>
<keyword id="KW-0067">ATP-binding</keyword>
<keyword id="KW-0156">Chromatin regulator</keyword>
<keyword id="KW-0175">Coiled coil</keyword>
<keyword id="KW-0287">Flowering</keyword>
<keyword id="KW-0347">Helicase</keyword>
<keyword id="KW-0378">Hydrolase</keyword>
<keyword id="KW-0547">Nucleotide-binding</keyword>
<keyword id="KW-0539">Nucleus</keyword>
<keyword id="KW-1185">Reference proteome</keyword>
<keyword id="KW-0677">Repeat</keyword>
<comment type="function">
    <text evidence="1 7 8 10 11">Possesses intrinsic ATP-dependent nucleosome-remodeling activity. Constitutes the catalytic subunit of several complexes capable of forming ordered nucleosome arrays on chromatin (By similarity). Involved in the formation of nucleosome distribution patterns (PubMed:24606212). Involved in nuclear proliferation during megagametogenesis and cell expansion in the sporophyte (PubMed:16286646). Required for the maintenance of the plant vegetative phase. In association with RLT1 or RLT2 may prevent the early activation of the vegetative-to-reproductive transition by regulating key genes that contribute to flower timing, such as FT, SEP1, SEP3, AGL8/FUL, SOC1 and FLC (PubMed:22694359). Necessary to acquire heat stress (HS) memory (PubMed:27680998).</text>
</comment>
<comment type="subunit">
    <text evidence="8 9 11">Interacts with RLT1 and RLT2 (PubMed:22694359). Interacts (via C-terminus) with RLT1 (via the DDT domain), RLT2 (via the DDT domain), PTM (via the DDT domain) and DDR4 (via the DDT domain) (PubMed:23691993). Binds to FGT1 (PubMed:27680998).</text>
</comment>
<comment type="subcellular location">
    <subcellularLocation>
        <location evidence="5 8">Nucleus</location>
    </subcellularLocation>
</comment>
<comment type="alternative products">
    <event type="alternative splicing"/>
    <isoform>
        <id>Q8RWY3-1</id>
        <name>1</name>
        <sequence type="displayed"/>
    </isoform>
    <isoform>
        <id>Q8RWY3-2</id>
        <name>2</name>
        <sequence type="described" ref="VSP_058012"/>
    </isoform>
</comment>
<comment type="tissue specificity">
    <text evidence="8">Highly expressed in growing tissues such as inflorescence and flower meristems, young leaves and floral organs. Expressed in roots, rosette and cauline leaves, stems, flowers, inflorescences and siliques.</text>
</comment>
<comment type="developmental stage">
    <text evidence="7">In developing ovule, expressed in all cells of the young nucellus, including the functional megaspore. After the initiation of megagametogenesis, expressed in most cells of the ovule, including the integuments, the developing megagametophyte, and the funiculus. In mature ovules, strongly expressed in the cellularized megagametophyte. After double fertilization, expressed in the developing embryo and the free nuclear endosperm until seed maturity. Expressed in developing male gametophytes and mature pollen grains.</text>
</comment>
<comment type="disruption phenotype">
    <text evidence="8 11">Reduced heat stress (HS) memory. Premature decline of expression of HSA32, HSP18.2, HSP21, HSP22 and HSP101 after HS in the double mutant plants chr11-1 and chr17-1 (PubMed:27680998). No visible phenotype under normal growth conditions, but the double mutant plants chr11-1 and chr17-1 are very small and display early flowering and sterility (PubMed:22694359).</text>
</comment>
<comment type="miscellaneous">
    <text evidence="7">Plants silencing CHR11 display reduced plant height and small cotyledonary embryos with limited cell expansion. Plants silencing CHR11 specifically at the onset of female gametogenesis (megagametogenesis) have defective female gametophytes arrested before the completion of the mitotic haploid nuclear divisions.</text>
</comment>
<comment type="similarity">
    <text evidence="13">Belongs to the SNF2/RAD54 helicase family. ISWI subfamily.</text>
</comment>
<comment type="sequence caution" evidence="13">
    <conflict type="erroneous gene model prediction">
        <sequence resource="EMBL-CDS" id="AAF08585"/>
    </conflict>
</comment>